<feature type="chain" id="PRO_0000162290" description="Dihydrolipoyllysine-residue acetyltransferase component of pyruvate dehydrogenase complex">
    <location>
        <begin position="1"/>
        <end position="430"/>
    </location>
</feature>
<feature type="domain" description="Lipoyl-binding" evidence="3">
    <location>
        <begin position="2"/>
        <end position="77"/>
    </location>
</feature>
<feature type="domain" description="Peripheral subunit-binding (PSBD)" evidence="4">
    <location>
        <begin position="125"/>
        <end position="162"/>
    </location>
</feature>
<feature type="region of interest" description="Disordered" evidence="5">
    <location>
        <begin position="80"/>
        <end position="122"/>
    </location>
</feature>
<feature type="region of interest" description="Disordered" evidence="5">
    <location>
        <begin position="165"/>
        <end position="199"/>
    </location>
</feature>
<feature type="compositionally biased region" description="Basic and acidic residues" evidence="5">
    <location>
        <begin position="84"/>
        <end position="104"/>
    </location>
</feature>
<feature type="compositionally biased region" description="Low complexity" evidence="5">
    <location>
        <begin position="168"/>
        <end position="192"/>
    </location>
</feature>
<feature type="active site" evidence="2">
    <location>
        <position position="401"/>
    </location>
</feature>
<feature type="modified residue" description="N6-lipoyllysine" evidence="1 3">
    <location>
        <position position="43"/>
    </location>
</feature>
<organism>
    <name type="scientific">Staphylococcus aureus (strain MRSA252)</name>
    <dbReference type="NCBI Taxonomy" id="282458"/>
    <lineage>
        <taxon>Bacteria</taxon>
        <taxon>Bacillati</taxon>
        <taxon>Bacillota</taxon>
        <taxon>Bacilli</taxon>
        <taxon>Bacillales</taxon>
        <taxon>Staphylococcaceae</taxon>
        <taxon>Staphylococcus</taxon>
    </lineage>
</organism>
<dbReference type="EC" id="2.3.1.12"/>
<dbReference type="EMBL" id="BX571856">
    <property type="protein sequence ID" value="CAG40071.1"/>
    <property type="molecule type" value="Genomic_DNA"/>
</dbReference>
<dbReference type="RefSeq" id="WP_000863437.1">
    <property type="nucleotide sequence ID" value="NC_002952.2"/>
</dbReference>
<dbReference type="SMR" id="Q6GHZ0"/>
<dbReference type="KEGG" id="sar:SAR1069"/>
<dbReference type="HOGENOM" id="CLU_016733_10_0_9"/>
<dbReference type="Proteomes" id="UP000000596">
    <property type="component" value="Chromosome"/>
</dbReference>
<dbReference type="GO" id="GO:0005737">
    <property type="term" value="C:cytoplasm"/>
    <property type="evidence" value="ECO:0007669"/>
    <property type="project" value="TreeGrafter"/>
</dbReference>
<dbReference type="GO" id="GO:0004742">
    <property type="term" value="F:dihydrolipoyllysine-residue acetyltransferase activity"/>
    <property type="evidence" value="ECO:0007669"/>
    <property type="project" value="UniProtKB-EC"/>
</dbReference>
<dbReference type="GO" id="GO:0031405">
    <property type="term" value="F:lipoic acid binding"/>
    <property type="evidence" value="ECO:0007669"/>
    <property type="project" value="TreeGrafter"/>
</dbReference>
<dbReference type="CDD" id="cd06849">
    <property type="entry name" value="lipoyl_domain"/>
    <property type="match status" value="1"/>
</dbReference>
<dbReference type="FunFam" id="3.30.559.10:FF:000007">
    <property type="entry name" value="Dihydrolipoamide acetyltransferase component of pyruvate dehydrogenase complex"/>
    <property type="match status" value="1"/>
</dbReference>
<dbReference type="FunFam" id="4.10.320.10:FF:000011">
    <property type="entry name" value="Dihydrolipoamide acetyltransferase component of pyruvate dehydrogenase complex"/>
    <property type="match status" value="1"/>
</dbReference>
<dbReference type="Gene3D" id="2.40.50.100">
    <property type="match status" value="1"/>
</dbReference>
<dbReference type="Gene3D" id="3.30.559.10">
    <property type="entry name" value="Chloramphenicol acetyltransferase-like domain"/>
    <property type="match status" value="1"/>
</dbReference>
<dbReference type="Gene3D" id="4.10.320.10">
    <property type="entry name" value="E3-binding domain"/>
    <property type="match status" value="1"/>
</dbReference>
<dbReference type="InterPro" id="IPR003016">
    <property type="entry name" value="2-oxoA_DH_lipoyl-BS"/>
</dbReference>
<dbReference type="InterPro" id="IPR001078">
    <property type="entry name" value="2-oxoacid_DH_actylTfrase"/>
</dbReference>
<dbReference type="InterPro" id="IPR050743">
    <property type="entry name" value="2-oxoacid_DH_E2_comp"/>
</dbReference>
<dbReference type="InterPro" id="IPR000089">
    <property type="entry name" value="Biotin_lipoyl"/>
</dbReference>
<dbReference type="InterPro" id="IPR023213">
    <property type="entry name" value="CAT-like_dom_sf"/>
</dbReference>
<dbReference type="InterPro" id="IPR036625">
    <property type="entry name" value="E3-bd_dom_sf"/>
</dbReference>
<dbReference type="InterPro" id="IPR004167">
    <property type="entry name" value="PSBD"/>
</dbReference>
<dbReference type="InterPro" id="IPR011053">
    <property type="entry name" value="Single_hybrid_motif"/>
</dbReference>
<dbReference type="PANTHER" id="PTHR43178">
    <property type="entry name" value="DIHYDROLIPOAMIDE ACETYLTRANSFERASE COMPONENT OF PYRUVATE DEHYDROGENASE COMPLEX"/>
    <property type="match status" value="1"/>
</dbReference>
<dbReference type="PANTHER" id="PTHR43178:SF5">
    <property type="entry name" value="LIPOAMIDE ACYLTRANSFERASE COMPONENT OF BRANCHED-CHAIN ALPHA-KETO ACID DEHYDROGENASE COMPLEX, MITOCHONDRIAL"/>
    <property type="match status" value="1"/>
</dbReference>
<dbReference type="Pfam" id="PF00198">
    <property type="entry name" value="2-oxoacid_dh"/>
    <property type="match status" value="1"/>
</dbReference>
<dbReference type="Pfam" id="PF00364">
    <property type="entry name" value="Biotin_lipoyl"/>
    <property type="match status" value="1"/>
</dbReference>
<dbReference type="Pfam" id="PF02817">
    <property type="entry name" value="E3_binding"/>
    <property type="match status" value="1"/>
</dbReference>
<dbReference type="SUPFAM" id="SSF52777">
    <property type="entry name" value="CoA-dependent acyltransferases"/>
    <property type="match status" value="1"/>
</dbReference>
<dbReference type="SUPFAM" id="SSF47005">
    <property type="entry name" value="Peripheral subunit-binding domain of 2-oxo acid dehydrogenase complex"/>
    <property type="match status" value="1"/>
</dbReference>
<dbReference type="SUPFAM" id="SSF51230">
    <property type="entry name" value="Single hybrid motif"/>
    <property type="match status" value="1"/>
</dbReference>
<dbReference type="PROSITE" id="PS50968">
    <property type="entry name" value="BIOTINYL_LIPOYL"/>
    <property type="match status" value="1"/>
</dbReference>
<dbReference type="PROSITE" id="PS00189">
    <property type="entry name" value="LIPOYL"/>
    <property type="match status" value="1"/>
</dbReference>
<dbReference type="PROSITE" id="PS51826">
    <property type="entry name" value="PSBD"/>
    <property type="match status" value="1"/>
</dbReference>
<comment type="function">
    <text>The pyruvate dehydrogenase complex catalyzes the overall conversion of pyruvate to acetyl-CoA and CO(2). It contains multiple copies of three enzymatic components: pyruvate dehydrogenase (E1), dihydrolipoamide acetyltransferase (E2) and lipoamide dehydrogenase (E3).</text>
</comment>
<comment type="catalytic activity">
    <reaction>
        <text>N(6)-[(R)-dihydrolipoyl]-L-lysyl-[protein] + acetyl-CoA = N(6)-[(R)-S(8)-acetyldihydrolipoyl]-L-lysyl-[protein] + CoA</text>
        <dbReference type="Rhea" id="RHEA:17017"/>
        <dbReference type="Rhea" id="RHEA-COMP:10475"/>
        <dbReference type="Rhea" id="RHEA-COMP:10478"/>
        <dbReference type="ChEBI" id="CHEBI:57287"/>
        <dbReference type="ChEBI" id="CHEBI:57288"/>
        <dbReference type="ChEBI" id="CHEBI:83100"/>
        <dbReference type="ChEBI" id="CHEBI:83111"/>
        <dbReference type="EC" id="2.3.1.12"/>
    </reaction>
</comment>
<comment type="cofactor">
    <cofactor evidence="1">
        <name>(R)-lipoate</name>
        <dbReference type="ChEBI" id="CHEBI:83088"/>
    </cofactor>
    <text evidence="1">Binds 1 lipoyl cofactor covalently.</text>
</comment>
<comment type="subunit">
    <text evidence="1">Forms a 24-polypeptide structural core with octahedral symmetry.</text>
</comment>
<comment type="similarity">
    <text evidence="6">Belongs to the 2-oxoacid dehydrogenase family.</text>
</comment>
<reference key="1">
    <citation type="journal article" date="2004" name="Proc. Natl. Acad. Sci. U.S.A.">
        <title>Complete genomes of two clinical Staphylococcus aureus strains: evidence for the rapid evolution of virulence and drug resistance.</title>
        <authorList>
            <person name="Holden M.T.G."/>
            <person name="Feil E.J."/>
            <person name="Lindsay J.A."/>
            <person name="Peacock S.J."/>
            <person name="Day N.P.J."/>
            <person name="Enright M.C."/>
            <person name="Foster T.J."/>
            <person name="Moore C.E."/>
            <person name="Hurst L."/>
            <person name="Atkin R."/>
            <person name="Barron A."/>
            <person name="Bason N."/>
            <person name="Bentley S.D."/>
            <person name="Chillingworth C."/>
            <person name="Chillingworth T."/>
            <person name="Churcher C."/>
            <person name="Clark L."/>
            <person name="Corton C."/>
            <person name="Cronin A."/>
            <person name="Doggett J."/>
            <person name="Dowd L."/>
            <person name="Feltwell T."/>
            <person name="Hance Z."/>
            <person name="Harris B."/>
            <person name="Hauser H."/>
            <person name="Holroyd S."/>
            <person name="Jagels K."/>
            <person name="James K.D."/>
            <person name="Lennard N."/>
            <person name="Line A."/>
            <person name="Mayes R."/>
            <person name="Moule S."/>
            <person name="Mungall K."/>
            <person name="Ormond D."/>
            <person name="Quail M.A."/>
            <person name="Rabbinowitsch E."/>
            <person name="Rutherford K.M."/>
            <person name="Sanders M."/>
            <person name="Sharp S."/>
            <person name="Simmonds M."/>
            <person name="Stevens K."/>
            <person name="Whitehead S."/>
            <person name="Barrell B.G."/>
            <person name="Spratt B.G."/>
            <person name="Parkhill J."/>
        </authorList>
    </citation>
    <scope>NUCLEOTIDE SEQUENCE [LARGE SCALE GENOMIC DNA]</scope>
    <source>
        <strain>MRSA252</strain>
    </source>
</reference>
<accession>Q6GHZ0</accession>
<sequence length="430" mass="46395">MAFEFRLPDIGEGIHEGEIVKWFVKAGDTIEEDDVLAEVQNDKSVVEIPSPVSGTVEEVMVEEGTVAVVGDVIVKIDAPDAEDMQFKGHDDDSSSKEEPAKEEAPAEQAPVATQTEEVDENRTVKAMPSVRKYAREKGVNIKAVSGSGKNGRITKEDVDAYLNGGAPTASNESAASATNEEVAETPAAPAAVSLEGDFPETTEKIPAMRRAIAKAMVNSKHTAPHVTLMDEIDVQALWDHRKKFKEIAAEQGTKLTFLPYVVKALVSALKKYPALNTSFNEEAGEIVHKHYWNIGIAADTDRGLLVPVVKHADRKSIFQISDEINELAVKARDGKLTADEMKGATCTISNIGSAGGQWFTPVINHPEVAILGIGRIAQKPIVKDGEIVAAPVLALSLSFDHRQIDGATGQNAMNHIKRLLNNPELLLMEG</sequence>
<proteinExistence type="inferred from homology"/>
<protein>
    <recommendedName>
        <fullName>Dihydrolipoyllysine-residue acetyltransferase component of pyruvate dehydrogenase complex</fullName>
        <ecNumber>2.3.1.12</ecNumber>
    </recommendedName>
    <alternativeName>
        <fullName>Dihydrolipoamide acetyltransferase component of pyruvate dehydrogenase complex</fullName>
    </alternativeName>
    <alternativeName>
        <fullName>E2</fullName>
    </alternativeName>
</protein>
<evidence type="ECO:0000250" key="1"/>
<evidence type="ECO:0000255" key="2"/>
<evidence type="ECO:0000255" key="3">
    <source>
        <dbReference type="PROSITE-ProRule" id="PRU01066"/>
    </source>
</evidence>
<evidence type="ECO:0000255" key="4">
    <source>
        <dbReference type="PROSITE-ProRule" id="PRU01170"/>
    </source>
</evidence>
<evidence type="ECO:0000256" key="5">
    <source>
        <dbReference type="SAM" id="MobiDB-lite"/>
    </source>
</evidence>
<evidence type="ECO:0000305" key="6"/>
<name>ODP2_STAAR</name>
<gene>
    <name type="primary">pdhC</name>
    <name type="ordered locus">SAR1069</name>
</gene>
<keyword id="KW-0012">Acyltransferase</keyword>
<keyword id="KW-0450">Lipoyl</keyword>
<keyword id="KW-0808">Transferase</keyword>